<dbReference type="EC" id="3.5.1.2" evidence="1"/>
<dbReference type="EMBL" id="CP000749">
    <property type="protein sequence ID" value="ABR72694.1"/>
    <property type="molecule type" value="Genomic_DNA"/>
</dbReference>
<dbReference type="SMR" id="A6W1W5"/>
<dbReference type="STRING" id="400668.Mmwyl1_3795"/>
<dbReference type="KEGG" id="mmw:Mmwyl1_3795"/>
<dbReference type="eggNOG" id="COG2066">
    <property type="taxonomic scope" value="Bacteria"/>
</dbReference>
<dbReference type="HOGENOM" id="CLU_027932_1_1_6"/>
<dbReference type="OrthoDB" id="9788822at2"/>
<dbReference type="GO" id="GO:0004359">
    <property type="term" value="F:glutaminase activity"/>
    <property type="evidence" value="ECO:0007669"/>
    <property type="project" value="UniProtKB-UniRule"/>
</dbReference>
<dbReference type="GO" id="GO:0006537">
    <property type="term" value="P:glutamate biosynthetic process"/>
    <property type="evidence" value="ECO:0007669"/>
    <property type="project" value="TreeGrafter"/>
</dbReference>
<dbReference type="GO" id="GO:0006543">
    <property type="term" value="P:glutamine catabolic process"/>
    <property type="evidence" value="ECO:0007669"/>
    <property type="project" value="TreeGrafter"/>
</dbReference>
<dbReference type="FunFam" id="3.40.710.10:FF:000005">
    <property type="entry name" value="Glutaminase"/>
    <property type="match status" value="1"/>
</dbReference>
<dbReference type="Gene3D" id="3.40.710.10">
    <property type="entry name" value="DD-peptidase/beta-lactamase superfamily"/>
    <property type="match status" value="1"/>
</dbReference>
<dbReference type="HAMAP" id="MF_00313">
    <property type="entry name" value="Glutaminase"/>
    <property type="match status" value="1"/>
</dbReference>
<dbReference type="InterPro" id="IPR012338">
    <property type="entry name" value="Beta-lactam/transpept-like"/>
</dbReference>
<dbReference type="InterPro" id="IPR015868">
    <property type="entry name" value="Glutaminase"/>
</dbReference>
<dbReference type="NCBIfam" id="TIGR03814">
    <property type="entry name" value="Gln_ase"/>
    <property type="match status" value="1"/>
</dbReference>
<dbReference type="NCBIfam" id="NF002132">
    <property type="entry name" value="PRK00971.1-1"/>
    <property type="match status" value="1"/>
</dbReference>
<dbReference type="NCBIfam" id="NF002133">
    <property type="entry name" value="PRK00971.1-2"/>
    <property type="match status" value="1"/>
</dbReference>
<dbReference type="PANTHER" id="PTHR12544">
    <property type="entry name" value="GLUTAMINASE"/>
    <property type="match status" value="1"/>
</dbReference>
<dbReference type="PANTHER" id="PTHR12544:SF29">
    <property type="entry name" value="GLUTAMINASE"/>
    <property type="match status" value="1"/>
</dbReference>
<dbReference type="Pfam" id="PF04960">
    <property type="entry name" value="Glutaminase"/>
    <property type="match status" value="1"/>
</dbReference>
<dbReference type="SUPFAM" id="SSF56601">
    <property type="entry name" value="beta-lactamase/transpeptidase-like"/>
    <property type="match status" value="1"/>
</dbReference>
<proteinExistence type="inferred from homology"/>
<evidence type="ECO:0000255" key="1">
    <source>
        <dbReference type="HAMAP-Rule" id="MF_00313"/>
    </source>
</evidence>
<organism>
    <name type="scientific">Marinomonas sp. (strain MWYL1)</name>
    <dbReference type="NCBI Taxonomy" id="400668"/>
    <lineage>
        <taxon>Bacteria</taxon>
        <taxon>Pseudomonadati</taxon>
        <taxon>Pseudomonadota</taxon>
        <taxon>Gammaproteobacteria</taxon>
        <taxon>Oceanospirillales</taxon>
        <taxon>Oceanospirillaceae</taxon>
        <taxon>Marinomonas</taxon>
    </lineage>
</organism>
<keyword id="KW-0378">Hydrolase</keyword>
<protein>
    <recommendedName>
        <fullName evidence="1">Glutaminase</fullName>
        <ecNumber evidence="1">3.5.1.2</ecNumber>
    </recommendedName>
</protein>
<name>GLSA_MARMS</name>
<feature type="chain" id="PRO_1000079077" description="Glutaminase">
    <location>
        <begin position="1"/>
        <end position="303"/>
    </location>
</feature>
<feature type="binding site" evidence="1">
    <location>
        <position position="61"/>
    </location>
    <ligand>
        <name>substrate</name>
    </ligand>
</feature>
<feature type="binding site" evidence="1">
    <location>
        <position position="111"/>
    </location>
    <ligand>
        <name>substrate</name>
    </ligand>
</feature>
<feature type="binding site" evidence="1">
    <location>
        <position position="155"/>
    </location>
    <ligand>
        <name>substrate</name>
    </ligand>
</feature>
<feature type="binding site" evidence="1">
    <location>
        <position position="162"/>
    </location>
    <ligand>
        <name>substrate</name>
    </ligand>
</feature>
<feature type="binding site" evidence="1">
    <location>
        <position position="186"/>
    </location>
    <ligand>
        <name>substrate</name>
    </ligand>
</feature>
<feature type="binding site" evidence="1">
    <location>
        <position position="238"/>
    </location>
    <ligand>
        <name>substrate</name>
    </ligand>
</feature>
<feature type="binding site" evidence="1">
    <location>
        <position position="256"/>
    </location>
    <ligand>
        <name>substrate</name>
    </ligand>
</feature>
<sequence>MEDLLHSIEQKVKPLIGLGKVADYIPALANVDPNQFGIAIYSNNGELYHAGQAYTDFSIQSISKVFSLTLAIKHYGEDMWKRVGREPSGNPFNSLVQLEYEAGVPRNPFINAGALVISDMNQSRFASPHYAMREFIRRLADNPHLNSDQIVANSEYEFRARNASMAYLMKAFGNFENDVEDVLHSYFDNCAMRMNCVDLAKSFSFLANKGYSQLSGEQILSARETTQVNGLLATSGLYDEAGNFAYRVGLPGKSGVGGGIIAIVPNRFSVCVWSPELNKSGNSLAGMAALEALSESIGWSVFG</sequence>
<accession>A6W1W5</accession>
<comment type="catalytic activity">
    <reaction evidence="1">
        <text>L-glutamine + H2O = L-glutamate + NH4(+)</text>
        <dbReference type="Rhea" id="RHEA:15889"/>
        <dbReference type="ChEBI" id="CHEBI:15377"/>
        <dbReference type="ChEBI" id="CHEBI:28938"/>
        <dbReference type="ChEBI" id="CHEBI:29985"/>
        <dbReference type="ChEBI" id="CHEBI:58359"/>
        <dbReference type="EC" id="3.5.1.2"/>
    </reaction>
</comment>
<comment type="subunit">
    <text evidence="1">Homotetramer.</text>
</comment>
<comment type="similarity">
    <text evidence="1">Belongs to the glutaminase family.</text>
</comment>
<gene>
    <name evidence="1" type="primary">glsA</name>
    <name type="ordered locus">Mmwyl1_3795</name>
</gene>
<reference key="1">
    <citation type="submission" date="2007-06" db="EMBL/GenBank/DDBJ databases">
        <title>Complete sequence of Marinomonas sp. MWYL1.</title>
        <authorList>
            <consortium name="US DOE Joint Genome Institute"/>
            <person name="Copeland A."/>
            <person name="Lucas S."/>
            <person name="Lapidus A."/>
            <person name="Barry K."/>
            <person name="Glavina del Rio T."/>
            <person name="Dalin E."/>
            <person name="Tice H."/>
            <person name="Pitluck S."/>
            <person name="Kiss H."/>
            <person name="Brettin T."/>
            <person name="Bruce D."/>
            <person name="Detter J.C."/>
            <person name="Han C."/>
            <person name="Schmutz J."/>
            <person name="Larimer F."/>
            <person name="Land M."/>
            <person name="Hauser L."/>
            <person name="Kyrpides N."/>
            <person name="Kim E."/>
            <person name="Johnston A.W.B."/>
            <person name="Todd J.D."/>
            <person name="Rogers R."/>
            <person name="Wexler M."/>
            <person name="Bond P.L."/>
            <person name="Li Y."/>
            <person name="Richardson P."/>
        </authorList>
    </citation>
    <scope>NUCLEOTIDE SEQUENCE [LARGE SCALE GENOMIC DNA]</scope>
    <source>
        <strain>MWYL1</strain>
    </source>
</reference>